<organism>
    <name type="scientific">Danio rerio</name>
    <name type="common">Zebrafish</name>
    <name type="synonym">Brachydanio rerio</name>
    <dbReference type="NCBI Taxonomy" id="7955"/>
    <lineage>
        <taxon>Eukaryota</taxon>
        <taxon>Metazoa</taxon>
        <taxon>Chordata</taxon>
        <taxon>Craniata</taxon>
        <taxon>Vertebrata</taxon>
        <taxon>Euteleostomi</taxon>
        <taxon>Actinopterygii</taxon>
        <taxon>Neopterygii</taxon>
        <taxon>Teleostei</taxon>
        <taxon>Ostariophysi</taxon>
        <taxon>Cypriniformes</taxon>
        <taxon>Danionidae</taxon>
        <taxon>Danioninae</taxon>
        <taxon>Danio</taxon>
    </lineage>
</organism>
<sequence>MTNEEPLPKKVRLSESDMKTLTREELCTRWKQHETYVQMLEAKYADLNSNDVTGLKESEEKLKQQQQESARRENILVMRLATKEQEMQECTTQIQYLKQVQQPSAAQLRSSMVDPAINLFFLKMKAELEQTKDKLEQAQNELSAWKFTPDSQTGKKLMAKCRMLIQENQELGRQLSQGRIAQLEAELALQKKYSEELKSSQDELNDFIIQLDEEVEGMQSTILVLQQQLRETRQQLSQMNQTQGTSSGAGPSRTSPSTASEPSTQSEPANASSSNVGKDCGRVSNGPSNGNSSQRGASGSSLYREASSADEDYPPSPSVSSPTHDGISKLSNHSEDAVSQRGGEGYVTQLSAGYESVDSPTGSETSVTQHSNDTDSNADSHEAAAVPKGSRTAGTRHSTQNGLDSSAAAVATNTSNASAGSVL</sequence>
<proteinExistence type="evidence at transcript level"/>
<comment type="function">
    <text evidence="1">Associated component of the WMM complex, a complex that mediates N6-methyladenosine (m6A) methylation of RNAs, a modification that plays a role in the efficiency of mRNA splicing and RNA processing.</text>
</comment>
<comment type="subunit">
    <text evidence="1">Component of the WMM complex, a N6-methyltransferase complex composed of a catalytic subcomplex, named MAC, and of an associated subcomplex, named MACOM. Component of the MACOM subcomplex.</text>
</comment>
<comment type="subcellular location">
    <subcellularLocation>
        <location evidence="1">Nucleus speckle</location>
    </subcellularLocation>
    <subcellularLocation>
        <location evidence="1">Nucleus</location>
        <location evidence="1">Nucleoplasm</location>
    </subcellularLocation>
</comment>
<comment type="developmental stage">
    <text evidence="3">Maternally expressed from the 4-cell stage and ubiquitously expressed through early embryogenesis, with enriched expression in the brain region at 36 hpf (hours post fertilization).</text>
</comment>
<comment type="disruption phenotype">
    <text evidence="3">Multiple developmental defects at 24 hpf (hours post fertilization) including smaller head and eyes, smaller brain ventricle, and curved notochord.</text>
</comment>
<comment type="similarity">
    <text evidence="6">Belongs to the fl(2)d family.</text>
</comment>
<name>FL2D_DANRE</name>
<protein>
    <recommendedName>
        <fullName evidence="6">Pre-mRNA-splicing regulator WTAP</fullName>
    </recommendedName>
    <alternativeName>
        <fullName evidence="1">Female-lethal(2)D homolog</fullName>
    </alternativeName>
    <alternativeName>
        <fullName evidence="1">WT1-associated protein</fullName>
    </alternativeName>
    <alternativeName>
        <fullName evidence="1">Wilms tumor 1-associating protein</fullName>
    </alternativeName>
</protein>
<keyword id="KW-0131">Cell cycle</keyword>
<keyword id="KW-0217">Developmental protein</keyword>
<keyword id="KW-0507">mRNA processing</keyword>
<keyword id="KW-0508">mRNA splicing</keyword>
<keyword id="KW-0539">Nucleus</keyword>
<keyword id="KW-1185">Reference proteome</keyword>
<feature type="chain" id="PRO_0000308627" description="Pre-mRNA-splicing regulator WTAP">
    <location>
        <begin position="1"/>
        <end position="423"/>
    </location>
</feature>
<feature type="region of interest" description="Disordered" evidence="2">
    <location>
        <begin position="234"/>
        <end position="423"/>
    </location>
</feature>
<feature type="compositionally biased region" description="Polar residues" evidence="2">
    <location>
        <begin position="239"/>
        <end position="276"/>
    </location>
</feature>
<feature type="compositionally biased region" description="Polar residues" evidence="2">
    <location>
        <begin position="285"/>
        <end position="301"/>
    </location>
</feature>
<feature type="compositionally biased region" description="Polar residues" evidence="2">
    <location>
        <begin position="358"/>
        <end position="377"/>
    </location>
</feature>
<feature type="compositionally biased region" description="Polar residues" evidence="2">
    <location>
        <begin position="392"/>
        <end position="404"/>
    </location>
</feature>
<feature type="compositionally biased region" description="Low complexity" evidence="2">
    <location>
        <begin position="405"/>
        <end position="423"/>
    </location>
</feature>
<gene>
    <name evidence="1" type="primary">wtap</name>
    <name evidence="4" type="ORF">ch211-195e3.2</name>
    <name evidence="5" type="ORF">zgc:66202</name>
</gene>
<accession>Q7SXL7</accession>
<evidence type="ECO:0000250" key="1">
    <source>
        <dbReference type="UniProtKB" id="Q15007"/>
    </source>
</evidence>
<evidence type="ECO:0000256" key="2">
    <source>
        <dbReference type="SAM" id="MobiDB-lite"/>
    </source>
</evidence>
<evidence type="ECO:0000269" key="3">
    <source>
    </source>
</evidence>
<evidence type="ECO:0000303" key="4">
    <source>
    </source>
</evidence>
<evidence type="ECO:0000303" key="5">
    <source ref="2"/>
</evidence>
<evidence type="ECO:0000305" key="6"/>
<dbReference type="EMBL" id="AL929182">
    <property type="protein sequence ID" value="CAI11704.1"/>
    <property type="molecule type" value="Genomic_DNA"/>
</dbReference>
<dbReference type="EMBL" id="BC055544">
    <property type="protein sequence ID" value="AAH55544.1"/>
    <property type="molecule type" value="mRNA"/>
</dbReference>
<dbReference type="RefSeq" id="NP_956147.1">
    <property type="nucleotide sequence ID" value="NM_199853.1"/>
</dbReference>
<dbReference type="RefSeq" id="XP_009292974.1">
    <property type="nucleotide sequence ID" value="XM_009294699.2"/>
</dbReference>
<dbReference type="SMR" id="Q7SXL7"/>
<dbReference type="FunCoup" id="Q7SXL7">
    <property type="interactions" value="1488"/>
</dbReference>
<dbReference type="STRING" id="7955.ENSDARP00000062551"/>
<dbReference type="PaxDb" id="7955-ENSDARP00000062551"/>
<dbReference type="Ensembl" id="ENSDART00000062552">
    <property type="protein sequence ID" value="ENSDARP00000062551"/>
    <property type="gene ID" value="ENSDARG00000042642"/>
</dbReference>
<dbReference type="GeneID" id="334058"/>
<dbReference type="KEGG" id="dre:334058"/>
<dbReference type="AGR" id="ZFIN:ZDB-GENE-030131-5990"/>
<dbReference type="CTD" id="9589"/>
<dbReference type="ZFIN" id="ZDB-GENE-030131-5990">
    <property type="gene designation" value="wtap"/>
</dbReference>
<dbReference type="eggNOG" id="KOG2991">
    <property type="taxonomic scope" value="Eukaryota"/>
</dbReference>
<dbReference type="HOGENOM" id="CLU_044551_1_0_1"/>
<dbReference type="InParanoid" id="Q7SXL7"/>
<dbReference type="OMA" id="NTDPHED"/>
<dbReference type="OrthoDB" id="3366661at2759"/>
<dbReference type="PhylomeDB" id="Q7SXL7"/>
<dbReference type="TreeFam" id="TF325869"/>
<dbReference type="PRO" id="PR:Q7SXL7"/>
<dbReference type="Proteomes" id="UP000000437">
    <property type="component" value="Chromosome 20"/>
</dbReference>
<dbReference type="Bgee" id="ENSDARG00000042642">
    <property type="expression patterns" value="Expressed in mature ovarian follicle and 28 other cell types or tissues"/>
</dbReference>
<dbReference type="ExpressionAtlas" id="Q7SXL7">
    <property type="expression patterns" value="baseline and differential"/>
</dbReference>
<dbReference type="GO" id="GO:0005737">
    <property type="term" value="C:cytoplasm"/>
    <property type="evidence" value="ECO:0000250"/>
    <property type="project" value="UniProtKB"/>
</dbReference>
<dbReference type="GO" id="GO:0016607">
    <property type="term" value="C:nuclear speck"/>
    <property type="evidence" value="ECO:0000250"/>
    <property type="project" value="UniProtKB"/>
</dbReference>
<dbReference type="GO" id="GO:0005634">
    <property type="term" value="C:nucleus"/>
    <property type="evidence" value="ECO:0000250"/>
    <property type="project" value="UniProtKB"/>
</dbReference>
<dbReference type="GO" id="GO:0036396">
    <property type="term" value="C:RNA N6-methyladenosine methyltransferase complex"/>
    <property type="evidence" value="ECO:0000250"/>
    <property type="project" value="UniProtKB"/>
</dbReference>
<dbReference type="GO" id="GO:0016556">
    <property type="term" value="P:mRNA modification"/>
    <property type="evidence" value="ECO:0007669"/>
    <property type="project" value="InterPro"/>
</dbReference>
<dbReference type="GO" id="GO:0006397">
    <property type="term" value="P:mRNA processing"/>
    <property type="evidence" value="ECO:0000250"/>
    <property type="project" value="UniProtKB"/>
</dbReference>
<dbReference type="GO" id="GO:0000381">
    <property type="term" value="P:regulation of alternative mRNA splicing, via spliceosome"/>
    <property type="evidence" value="ECO:0000250"/>
    <property type="project" value="UniProtKB"/>
</dbReference>
<dbReference type="GO" id="GO:0042981">
    <property type="term" value="P:regulation of apoptotic process"/>
    <property type="evidence" value="ECO:0000316"/>
    <property type="project" value="ZFIN"/>
</dbReference>
<dbReference type="GO" id="GO:0008380">
    <property type="term" value="P:RNA splicing"/>
    <property type="evidence" value="ECO:0007669"/>
    <property type="project" value="UniProtKB-KW"/>
</dbReference>
<dbReference type="InterPro" id="IPR033757">
    <property type="entry name" value="WTAP"/>
</dbReference>
<dbReference type="PANTHER" id="PTHR15217:SF0">
    <property type="entry name" value="PRE-MRNA-SPLICING REGULATOR WTAP"/>
    <property type="match status" value="1"/>
</dbReference>
<dbReference type="PANTHER" id="PTHR15217">
    <property type="entry name" value="WILMS' TUMOR 1-ASSOCIATING PROTEIN"/>
    <property type="match status" value="1"/>
</dbReference>
<dbReference type="Pfam" id="PF17098">
    <property type="entry name" value="Wtap"/>
    <property type="match status" value="1"/>
</dbReference>
<reference key="1">
    <citation type="journal article" date="2013" name="Nature">
        <title>The zebrafish reference genome sequence and its relationship to the human genome.</title>
        <authorList>
            <person name="Howe K."/>
            <person name="Clark M.D."/>
            <person name="Torroja C.F."/>
            <person name="Torrance J."/>
            <person name="Berthelot C."/>
            <person name="Muffato M."/>
            <person name="Collins J.E."/>
            <person name="Humphray S."/>
            <person name="McLaren K."/>
            <person name="Matthews L."/>
            <person name="McLaren S."/>
            <person name="Sealy I."/>
            <person name="Caccamo M."/>
            <person name="Churcher C."/>
            <person name="Scott C."/>
            <person name="Barrett J.C."/>
            <person name="Koch R."/>
            <person name="Rauch G.J."/>
            <person name="White S."/>
            <person name="Chow W."/>
            <person name="Kilian B."/>
            <person name="Quintais L.T."/>
            <person name="Guerra-Assuncao J.A."/>
            <person name="Zhou Y."/>
            <person name="Gu Y."/>
            <person name="Yen J."/>
            <person name="Vogel J.H."/>
            <person name="Eyre T."/>
            <person name="Redmond S."/>
            <person name="Banerjee R."/>
            <person name="Chi J."/>
            <person name="Fu B."/>
            <person name="Langley E."/>
            <person name="Maguire S.F."/>
            <person name="Laird G.K."/>
            <person name="Lloyd D."/>
            <person name="Kenyon E."/>
            <person name="Donaldson S."/>
            <person name="Sehra H."/>
            <person name="Almeida-King J."/>
            <person name="Loveland J."/>
            <person name="Trevanion S."/>
            <person name="Jones M."/>
            <person name="Quail M."/>
            <person name="Willey D."/>
            <person name="Hunt A."/>
            <person name="Burton J."/>
            <person name="Sims S."/>
            <person name="McLay K."/>
            <person name="Plumb B."/>
            <person name="Davis J."/>
            <person name="Clee C."/>
            <person name="Oliver K."/>
            <person name="Clark R."/>
            <person name="Riddle C."/>
            <person name="Elliot D."/>
            <person name="Threadgold G."/>
            <person name="Harden G."/>
            <person name="Ware D."/>
            <person name="Begum S."/>
            <person name="Mortimore B."/>
            <person name="Kerry G."/>
            <person name="Heath P."/>
            <person name="Phillimore B."/>
            <person name="Tracey A."/>
            <person name="Corby N."/>
            <person name="Dunn M."/>
            <person name="Johnson C."/>
            <person name="Wood J."/>
            <person name="Clark S."/>
            <person name="Pelan S."/>
            <person name="Griffiths G."/>
            <person name="Smith M."/>
            <person name="Glithero R."/>
            <person name="Howden P."/>
            <person name="Barker N."/>
            <person name="Lloyd C."/>
            <person name="Stevens C."/>
            <person name="Harley J."/>
            <person name="Holt K."/>
            <person name="Panagiotidis G."/>
            <person name="Lovell J."/>
            <person name="Beasley H."/>
            <person name="Henderson C."/>
            <person name="Gordon D."/>
            <person name="Auger K."/>
            <person name="Wright D."/>
            <person name="Collins J."/>
            <person name="Raisen C."/>
            <person name="Dyer L."/>
            <person name="Leung K."/>
            <person name="Robertson L."/>
            <person name="Ambridge K."/>
            <person name="Leongamornlert D."/>
            <person name="McGuire S."/>
            <person name="Gilderthorp R."/>
            <person name="Griffiths C."/>
            <person name="Manthravadi D."/>
            <person name="Nichol S."/>
            <person name="Barker G."/>
            <person name="Whitehead S."/>
            <person name="Kay M."/>
            <person name="Brown J."/>
            <person name="Murnane C."/>
            <person name="Gray E."/>
            <person name="Humphries M."/>
            <person name="Sycamore N."/>
            <person name="Barker D."/>
            <person name="Saunders D."/>
            <person name="Wallis J."/>
            <person name="Babbage A."/>
            <person name="Hammond S."/>
            <person name="Mashreghi-Mohammadi M."/>
            <person name="Barr L."/>
            <person name="Martin S."/>
            <person name="Wray P."/>
            <person name="Ellington A."/>
            <person name="Matthews N."/>
            <person name="Ellwood M."/>
            <person name="Woodmansey R."/>
            <person name="Clark G."/>
            <person name="Cooper J."/>
            <person name="Tromans A."/>
            <person name="Grafham D."/>
            <person name="Skuce C."/>
            <person name="Pandian R."/>
            <person name="Andrews R."/>
            <person name="Harrison E."/>
            <person name="Kimberley A."/>
            <person name="Garnett J."/>
            <person name="Fosker N."/>
            <person name="Hall R."/>
            <person name="Garner P."/>
            <person name="Kelly D."/>
            <person name="Bird C."/>
            <person name="Palmer S."/>
            <person name="Gehring I."/>
            <person name="Berger A."/>
            <person name="Dooley C.M."/>
            <person name="Ersan-Urun Z."/>
            <person name="Eser C."/>
            <person name="Geiger H."/>
            <person name="Geisler M."/>
            <person name="Karotki L."/>
            <person name="Kirn A."/>
            <person name="Konantz J."/>
            <person name="Konantz M."/>
            <person name="Oberlander M."/>
            <person name="Rudolph-Geiger S."/>
            <person name="Teucke M."/>
            <person name="Lanz C."/>
            <person name="Raddatz G."/>
            <person name="Osoegawa K."/>
            <person name="Zhu B."/>
            <person name="Rapp A."/>
            <person name="Widaa S."/>
            <person name="Langford C."/>
            <person name="Yang F."/>
            <person name="Schuster S.C."/>
            <person name="Carter N.P."/>
            <person name="Harrow J."/>
            <person name="Ning Z."/>
            <person name="Herrero J."/>
            <person name="Searle S.M."/>
            <person name="Enright A."/>
            <person name="Geisler R."/>
            <person name="Plasterk R.H."/>
            <person name="Lee C."/>
            <person name="Westerfield M."/>
            <person name="de Jong P.J."/>
            <person name="Zon L.I."/>
            <person name="Postlethwait J.H."/>
            <person name="Nusslein-Volhard C."/>
            <person name="Hubbard T.J."/>
            <person name="Roest Crollius H."/>
            <person name="Rogers J."/>
            <person name="Stemple D.L."/>
        </authorList>
    </citation>
    <scope>NUCLEOTIDE SEQUENCE [LARGE SCALE GENOMIC DNA]</scope>
    <source>
        <strain>Tuebingen</strain>
    </source>
</reference>
<reference key="2">
    <citation type="submission" date="2003-08" db="EMBL/GenBank/DDBJ databases">
        <authorList>
            <consortium name="NIH - Zebrafish Gene Collection (ZGC) project"/>
        </authorList>
    </citation>
    <scope>NUCLEOTIDE SEQUENCE [LARGE SCALE MRNA]</scope>
</reference>
<reference key="3">
    <citation type="journal article" date="2014" name="Cell Res.">
        <title>Mammalian WTAP is a regulatory subunit of the RNA N6-methyladenosine methyltransferase.</title>
        <authorList>
            <person name="Ping X.L."/>
            <person name="Sun B.F."/>
            <person name="Wang L."/>
            <person name="Xiao W."/>
            <person name="Yang X."/>
            <person name="Wang W.J."/>
            <person name="Adhikari S."/>
            <person name="Shi Y."/>
            <person name="Lv Y."/>
            <person name="Chen Y.S."/>
            <person name="Zhao X."/>
            <person name="Li A."/>
            <person name="Yang Y."/>
            <person name="Dahal U."/>
            <person name="Lou X.M."/>
            <person name="Liu X."/>
            <person name="Huang J."/>
            <person name="Yuan W.P."/>
            <person name="Zhu X.F."/>
            <person name="Cheng T."/>
            <person name="Zhao Y.L."/>
            <person name="Wang X."/>
            <person name="Danielsen J.M."/>
            <person name="Liu F."/>
            <person name="Yang Y.G."/>
        </authorList>
    </citation>
    <scope>DEVELOPMENTAL STAGE</scope>
    <scope>DISRUPTION PHENOTYPE</scope>
</reference>